<proteinExistence type="inferred from homology"/>
<dbReference type="EMBL" id="CP000673">
    <property type="protein sequence ID" value="EDK32284.1"/>
    <property type="molecule type" value="Genomic_DNA"/>
</dbReference>
<dbReference type="RefSeq" id="WP_011988809.1">
    <property type="nucleotide sequence ID" value="NC_009706.1"/>
</dbReference>
<dbReference type="SMR" id="A5N4Q3"/>
<dbReference type="STRING" id="431943.CKL_0230"/>
<dbReference type="KEGG" id="ckl:CKL_0230"/>
<dbReference type="eggNOG" id="COG0092">
    <property type="taxonomic scope" value="Bacteria"/>
</dbReference>
<dbReference type="HOGENOM" id="CLU_058591_0_2_9"/>
<dbReference type="Proteomes" id="UP000002411">
    <property type="component" value="Chromosome"/>
</dbReference>
<dbReference type="GO" id="GO:0022627">
    <property type="term" value="C:cytosolic small ribosomal subunit"/>
    <property type="evidence" value="ECO:0007669"/>
    <property type="project" value="TreeGrafter"/>
</dbReference>
<dbReference type="GO" id="GO:0003729">
    <property type="term" value="F:mRNA binding"/>
    <property type="evidence" value="ECO:0007669"/>
    <property type="project" value="UniProtKB-UniRule"/>
</dbReference>
<dbReference type="GO" id="GO:0019843">
    <property type="term" value="F:rRNA binding"/>
    <property type="evidence" value="ECO:0007669"/>
    <property type="project" value="UniProtKB-UniRule"/>
</dbReference>
<dbReference type="GO" id="GO:0003735">
    <property type="term" value="F:structural constituent of ribosome"/>
    <property type="evidence" value="ECO:0007669"/>
    <property type="project" value="InterPro"/>
</dbReference>
<dbReference type="GO" id="GO:0006412">
    <property type="term" value="P:translation"/>
    <property type="evidence" value="ECO:0007669"/>
    <property type="project" value="UniProtKB-UniRule"/>
</dbReference>
<dbReference type="CDD" id="cd02412">
    <property type="entry name" value="KH-II_30S_S3"/>
    <property type="match status" value="1"/>
</dbReference>
<dbReference type="FunFam" id="3.30.1140.32:FF:000002">
    <property type="entry name" value="30S ribosomal protein S3"/>
    <property type="match status" value="1"/>
</dbReference>
<dbReference type="FunFam" id="3.30.300.20:FF:000001">
    <property type="entry name" value="30S ribosomal protein S3"/>
    <property type="match status" value="1"/>
</dbReference>
<dbReference type="Gene3D" id="3.30.300.20">
    <property type="match status" value="1"/>
</dbReference>
<dbReference type="Gene3D" id="3.30.1140.32">
    <property type="entry name" value="Ribosomal protein S3, C-terminal domain"/>
    <property type="match status" value="1"/>
</dbReference>
<dbReference type="HAMAP" id="MF_01309_B">
    <property type="entry name" value="Ribosomal_uS3_B"/>
    <property type="match status" value="1"/>
</dbReference>
<dbReference type="InterPro" id="IPR004087">
    <property type="entry name" value="KH_dom"/>
</dbReference>
<dbReference type="InterPro" id="IPR015946">
    <property type="entry name" value="KH_dom-like_a/b"/>
</dbReference>
<dbReference type="InterPro" id="IPR004044">
    <property type="entry name" value="KH_dom_type_2"/>
</dbReference>
<dbReference type="InterPro" id="IPR009019">
    <property type="entry name" value="KH_sf_prok-type"/>
</dbReference>
<dbReference type="InterPro" id="IPR036419">
    <property type="entry name" value="Ribosomal_S3_C_sf"/>
</dbReference>
<dbReference type="InterPro" id="IPR005704">
    <property type="entry name" value="Ribosomal_uS3_bac-typ"/>
</dbReference>
<dbReference type="InterPro" id="IPR001351">
    <property type="entry name" value="Ribosomal_uS3_C"/>
</dbReference>
<dbReference type="InterPro" id="IPR018280">
    <property type="entry name" value="Ribosomal_uS3_CS"/>
</dbReference>
<dbReference type="NCBIfam" id="TIGR01009">
    <property type="entry name" value="rpsC_bact"/>
    <property type="match status" value="1"/>
</dbReference>
<dbReference type="PANTHER" id="PTHR11760">
    <property type="entry name" value="30S/40S RIBOSOMAL PROTEIN S3"/>
    <property type="match status" value="1"/>
</dbReference>
<dbReference type="PANTHER" id="PTHR11760:SF19">
    <property type="entry name" value="SMALL RIBOSOMAL SUBUNIT PROTEIN US3C"/>
    <property type="match status" value="1"/>
</dbReference>
<dbReference type="Pfam" id="PF07650">
    <property type="entry name" value="KH_2"/>
    <property type="match status" value="1"/>
</dbReference>
<dbReference type="Pfam" id="PF00189">
    <property type="entry name" value="Ribosomal_S3_C"/>
    <property type="match status" value="1"/>
</dbReference>
<dbReference type="SMART" id="SM00322">
    <property type="entry name" value="KH"/>
    <property type="match status" value="1"/>
</dbReference>
<dbReference type="SUPFAM" id="SSF54814">
    <property type="entry name" value="Prokaryotic type KH domain (KH-domain type II)"/>
    <property type="match status" value="1"/>
</dbReference>
<dbReference type="SUPFAM" id="SSF54821">
    <property type="entry name" value="Ribosomal protein S3 C-terminal domain"/>
    <property type="match status" value="1"/>
</dbReference>
<dbReference type="PROSITE" id="PS50823">
    <property type="entry name" value="KH_TYPE_2"/>
    <property type="match status" value="1"/>
</dbReference>
<dbReference type="PROSITE" id="PS00548">
    <property type="entry name" value="RIBOSOMAL_S3"/>
    <property type="match status" value="1"/>
</dbReference>
<sequence>MGQKVHPHGLRVGIIKEWDAKWYADKKNFADNLVEDNKIRKFVKKKGAIAGISKIQIERAAKRIKLNIFTAKPGMIIGKGGQGIEALKTELKKIVPDKVILINIVEVKVAEADAQLMAENIALQLEKRISFRRAMKQTIQRAMKSGIKGVKTTCSGRLGGAEIARSESYHEGTIPLQTLRADIDYGFAEADTTYGKIGVKVWVYKGEVLPVKKPVENKEEAKA</sequence>
<protein>
    <recommendedName>
        <fullName evidence="1">Small ribosomal subunit protein uS3</fullName>
    </recommendedName>
    <alternativeName>
        <fullName evidence="2">30S ribosomal protein S3</fullName>
    </alternativeName>
</protein>
<gene>
    <name evidence="1" type="primary">rpsC</name>
    <name type="ordered locus">CKL_0230</name>
</gene>
<keyword id="KW-1185">Reference proteome</keyword>
<keyword id="KW-0687">Ribonucleoprotein</keyword>
<keyword id="KW-0689">Ribosomal protein</keyword>
<keyword id="KW-0694">RNA-binding</keyword>
<keyword id="KW-0699">rRNA-binding</keyword>
<organism>
    <name type="scientific">Clostridium kluyveri (strain ATCC 8527 / DSM 555 / NBRC 12016 / NCIMB 10680 / K1)</name>
    <dbReference type="NCBI Taxonomy" id="431943"/>
    <lineage>
        <taxon>Bacteria</taxon>
        <taxon>Bacillati</taxon>
        <taxon>Bacillota</taxon>
        <taxon>Clostridia</taxon>
        <taxon>Eubacteriales</taxon>
        <taxon>Clostridiaceae</taxon>
        <taxon>Clostridium</taxon>
    </lineage>
</organism>
<feature type="chain" id="PRO_1000086109" description="Small ribosomal subunit protein uS3">
    <location>
        <begin position="1"/>
        <end position="223"/>
    </location>
</feature>
<feature type="domain" description="KH type-2" evidence="1">
    <location>
        <begin position="39"/>
        <end position="108"/>
    </location>
</feature>
<reference key="1">
    <citation type="journal article" date="2008" name="Proc. Natl. Acad. Sci. U.S.A.">
        <title>The genome of Clostridium kluyveri, a strict anaerobe with unique metabolic features.</title>
        <authorList>
            <person name="Seedorf H."/>
            <person name="Fricke W.F."/>
            <person name="Veith B."/>
            <person name="Brueggemann H."/>
            <person name="Liesegang H."/>
            <person name="Strittmatter A."/>
            <person name="Miethke M."/>
            <person name="Buckel W."/>
            <person name="Hinderberger J."/>
            <person name="Li F."/>
            <person name="Hagemeier C."/>
            <person name="Thauer R.K."/>
            <person name="Gottschalk G."/>
        </authorList>
    </citation>
    <scope>NUCLEOTIDE SEQUENCE [LARGE SCALE GENOMIC DNA]</scope>
    <source>
        <strain>ATCC 8527 / DSM 555 / NBRC 12016 / NCIMB 10680 / K1</strain>
    </source>
</reference>
<evidence type="ECO:0000255" key="1">
    <source>
        <dbReference type="HAMAP-Rule" id="MF_01309"/>
    </source>
</evidence>
<evidence type="ECO:0000305" key="2"/>
<comment type="function">
    <text evidence="1">Binds the lower part of the 30S subunit head. Binds mRNA in the 70S ribosome, positioning it for translation.</text>
</comment>
<comment type="subunit">
    <text evidence="1">Part of the 30S ribosomal subunit. Forms a tight complex with proteins S10 and S14.</text>
</comment>
<comment type="similarity">
    <text evidence="1">Belongs to the universal ribosomal protein uS3 family.</text>
</comment>
<accession>A5N4Q3</accession>
<name>RS3_CLOK5</name>